<proteinExistence type="inferred from homology"/>
<name>IF2_CHLMU</name>
<organism>
    <name type="scientific">Chlamydia muridarum (strain MoPn / Nigg)</name>
    <dbReference type="NCBI Taxonomy" id="243161"/>
    <lineage>
        <taxon>Bacteria</taxon>
        <taxon>Pseudomonadati</taxon>
        <taxon>Chlamydiota</taxon>
        <taxon>Chlamydiia</taxon>
        <taxon>Chlamydiales</taxon>
        <taxon>Chlamydiaceae</taxon>
        <taxon>Chlamydia/Chlamydophila group</taxon>
        <taxon>Chlamydia</taxon>
    </lineage>
</organism>
<dbReference type="EMBL" id="AE002160">
    <property type="protein sequence ID" value="AAF39229.1"/>
    <property type="molecule type" value="Genomic_DNA"/>
</dbReference>
<dbReference type="PIR" id="G81709">
    <property type="entry name" value="G81709"/>
</dbReference>
<dbReference type="RefSeq" id="WP_010230269.1">
    <property type="nucleotide sequence ID" value="NZ_CP027217.1"/>
</dbReference>
<dbReference type="SMR" id="Q9PKU0"/>
<dbReference type="GeneID" id="1245723"/>
<dbReference type="KEGG" id="cmu:TC_0371"/>
<dbReference type="eggNOG" id="COG0532">
    <property type="taxonomic scope" value="Bacteria"/>
</dbReference>
<dbReference type="HOGENOM" id="CLU_006301_3_1_0"/>
<dbReference type="OrthoDB" id="9811804at2"/>
<dbReference type="Proteomes" id="UP000000800">
    <property type="component" value="Chromosome"/>
</dbReference>
<dbReference type="GO" id="GO:0005829">
    <property type="term" value="C:cytosol"/>
    <property type="evidence" value="ECO:0007669"/>
    <property type="project" value="TreeGrafter"/>
</dbReference>
<dbReference type="GO" id="GO:0005525">
    <property type="term" value="F:GTP binding"/>
    <property type="evidence" value="ECO:0007669"/>
    <property type="project" value="UniProtKB-KW"/>
</dbReference>
<dbReference type="GO" id="GO:0003924">
    <property type="term" value="F:GTPase activity"/>
    <property type="evidence" value="ECO:0007669"/>
    <property type="project" value="UniProtKB-UniRule"/>
</dbReference>
<dbReference type="GO" id="GO:0003743">
    <property type="term" value="F:translation initiation factor activity"/>
    <property type="evidence" value="ECO:0007669"/>
    <property type="project" value="UniProtKB-UniRule"/>
</dbReference>
<dbReference type="CDD" id="cd01887">
    <property type="entry name" value="IF2_eIF5B"/>
    <property type="match status" value="1"/>
</dbReference>
<dbReference type="CDD" id="cd03702">
    <property type="entry name" value="IF2_mtIF2_II"/>
    <property type="match status" value="1"/>
</dbReference>
<dbReference type="CDD" id="cd03692">
    <property type="entry name" value="mtIF2_IVc"/>
    <property type="match status" value="1"/>
</dbReference>
<dbReference type="FunFam" id="2.40.30.10:FF:000008">
    <property type="entry name" value="Translation initiation factor IF-2"/>
    <property type="match status" value="1"/>
</dbReference>
<dbReference type="FunFam" id="2.40.30.10:FF:000054">
    <property type="entry name" value="Translation initiation factor IF-2"/>
    <property type="match status" value="1"/>
</dbReference>
<dbReference type="FunFam" id="3.40.50.10050:FF:000001">
    <property type="entry name" value="Translation initiation factor IF-2"/>
    <property type="match status" value="1"/>
</dbReference>
<dbReference type="FunFam" id="3.40.50.300:FF:000019">
    <property type="entry name" value="Translation initiation factor IF-2"/>
    <property type="match status" value="1"/>
</dbReference>
<dbReference type="Gene3D" id="3.40.50.300">
    <property type="entry name" value="P-loop containing nucleotide triphosphate hydrolases"/>
    <property type="match status" value="1"/>
</dbReference>
<dbReference type="Gene3D" id="2.40.30.10">
    <property type="entry name" value="Translation factors"/>
    <property type="match status" value="2"/>
</dbReference>
<dbReference type="Gene3D" id="3.40.50.10050">
    <property type="entry name" value="Translation initiation factor IF- 2, domain 3"/>
    <property type="match status" value="1"/>
</dbReference>
<dbReference type="HAMAP" id="MF_00100_B">
    <property type="entry name" value="IF_2_B"/>
    <property type="match status" value="1"/>
</dbReference>
<dbReference type="InterPro" id="IPR053905">
    <property type="entry name" value="EF-G-like_DII"/>
</dbReference>
<dbReference type="InterPro" id="IPR004161">
    <property type="entry name" value="EFTu-like_2"/>
</dbReference>
<dbReference type="InterPro" id="IPR044145">
    <property type="entry name" value="IF2_II"/>
</dbReference>
<dbReference type="InterPro" id="IPR006847">
    <property type="entry name" value="IF2_N"/>
</dbReference>
<dbReference type="InterPro" id="IPR027417">
    <property type="entry name" value="P-loop_NTPase"/>
</dbReference>
<dbReference type="InterPro" id="IPR005225">
    <property type="entry name" value="Small_GTP-bd"/>
</dbReference>
<dbReference type="InterPro" id="IPR000795">
    <property type="entry name" value="T_Tr_GTP-bd_dom"/>
</dbReference>
<dbReference type="InterPro" id="IPR000178">
    <property type="entry name" value="TF_IF2_bacterial-like"/>
</dbReference>
<dbReference type="InterPro" id="IPR015760">
    <property type="entry name" value="TIF_IF2"/>
</dbReference>
<dbReference type="InterPro" id="IPR023115">
    <property type="entry name" value="TIF_IF2_dom3"/>
</dbReference>
<dbReference type="InterPro" id="IPR036925">
    <property type="entry name" value="TIF_IF2_dom3_sf"/>
</dbReference>
<dbReference type="InterPro" id="IPR009000">
    <property type="entry name" value="Transl_B-barrel_sf"/>
</dbReference>
<dbReference type="NCBIfam" id="TIGR00487">
    <property type="entry name" value="IF-2"/>
    <property type="match status" value="1"/>
</dbReference>
<dbReference type="NCBIfam" id="TIGR00231">
    <property type="entry name" value="small_GTP"/>
    <property type="match status" value="1"/>
</dbReference>
<dbReference type="PANTHER" id="PTHR43381:SF5">
    <property type="entry name" value="TR-TYPE G DOMAIN-CONTAINING PROTEIN"/>
    <property type="match status" value="1"/>
</dbReference>
<dbReference type="PANTHER" id="PTHR43381">
    <property type="entry name" value="TRANSLATION INITIATION FACTOR IF-2-RELATED"/>
    <property type="match status" value="1"/>
</dbReference>
<dbReference type="Pfam" id="PF22042">
    <property type="entry name" value="EF-G_D2"/>
    <property type="match status" value="1"/>
</dbReference>
<dbReference type="Pfam" id="PF00009">
    <property type="entry name" value="GTP_EFTU"/>
    <property type="match status" value="1"/>
</dbReference>
<dbReference type="Pfam" id="PF03144">
    <property type="entry name" value="GTP_EFTU_D2"/>
    <property type="match status" value="1"/>
</dbReference>
<dbReference type="Pfam" id="PF11987">
    <property type="entry name" value="IF-2"/>
    <property type="match status" value="1"/>
</dbReference>
<dbReference type="Pfam" id="PF04760">
    <property type="entry name" value="IF2_N"/>
    <property type="match status" value="1"/>
</dbReference>
<dbReference type="SUPFAM" id="SSF52156">
    <property type="entry name" value="Initiation factor IF2/eIF5b, domain 3"/>
    <property type="match status" value="1"/>
</dbReference>
<dbReference type="SUPFAM" id="SSF52540">
    <property type="entry name" value="P-loop containing nucleoside triphosphate hydrolases"/>
    <property type="match status" value="1"/>
</dbReference>
<dbReference type="SUPFAM" id="SSF50447">
    <property type="entry name" value="Translation proteins"/>
    <property type="match status" value="2"/>
</dbReference>
<dbReference type="PROSITE" id="PS51722">
    <property type="entry name" value="G_TR_2"/>
    <property type="match status" value="1"/>
</dbReference>
<sequence length="896" mass="97498">MEHAKLTKNLKLKIKNAQLTKAAGLDKLKQKLAQAGSSDTKNSPVSKAQTKEKSSKKTAGTTASAPEIESGATESTARRIRAKDRSSFAAEEPSTTVALPGDASHLTLDALPSADSTEPLSNSSQEKIVEDAVETPNSPQEDGKELQEEVANEQPARNEETPIIRTRTEPKSVVSIKPKFGPTGKHINHLLAKTFKAPAKETKAAAPAEETTQQTRPSVETASTKQQQPSGTNTRPAQSAPAYRRESTNNNNNSKRGPDRDRTKRSDENVKAFTGRDRYGLNEGSSEEDKWRKKRVHKTKKQSEEHVVQCPSHIKIALPITVKDLAAEMKLKASELIQKLFIHGMTYVVNDVLDSQTVVQYIGLEFGCTIEIDSSEKEKLCLVENTVRDEINETNPQKLVIRSPIVAFMGHVDHGKTTLIDALRQSNMAASEAGAITQHMGAFKCSTPVGEITVLDTPGHEAFSAMRARGAEVCDIVVLVVAGDEGIKEQTVEAIEHAKAANITIVVAINKCDKPNFNEETVYRQLAELNLLPEAWGGSIATINTSAKTGEGLQDLLEMLALQAEVLELKADPSARARGLVIESELHKGLGAVATVLVQNGTLHLGEALVFNDCYGKIKTMHNEHNQLLQSASPSTPVLITGLSAIPKAGDPFIVVKNEKVAKEIISARLAGQQRSAALQKKRPNFDAVLQNKKTLKLIIKADVQGSIEALAHSILNIRSEKVDVEILSSGVGDISESDIRLASASKATVIGFHTSVESHAESLIKSLNVKVCLFDIIYHAVDAIKEIMTGLLDPIAEEKNLGAAEIKATFKSSQLGTIYGCLVTEGTMVRNQKVRIIRDKEVLWKCSLSSLKRLKEDVKEVKKGMECGILLDNYQQAQIGDTLQCYEVIYHPQKL</sequence>
<comment type="function">
    <text evidence="1">One of the essential components for the initiation of protein synthesis. Protects formylmethionyl-tRNA from spontaneous hydrolysis and promotes its binding to the 30S ribosomal subunits. Also involved in the hydrolysis of GTP during the formation of the 70S ribosomal complex (By similarity).</text>
</comment>
<comment type="subcellular location">
    <subcellularLocation>
        <location evidence="1">Cytoplasm</location>
    </subcellularLocation>
</comment>
<comment type="similarity">
    <text evidence="3">Belongs to the TRAFAC class translation factor GTPase superfamily. Classic translation factor GTPase family. IF-2 subfamily.</text>
</comment>
<keyword id="KW-0963">Cytoplasm</keyword>
<keyword id="KW-0342">GTP-binding</keyword>
<keyword id="KW-0396">Initiation factor</keyword>
<keyword id="KW-0547">Nucleotide-binding</keyword>
<keyword id="KW-0648">Protein biosynthesis</keyword>
<gene>
    <name type="primary">infB</name>
    <name type="ordered locus">TC_0371</name>
</gene>
<protein>
    <recommendedName>
        <fullName>Translation initiation factor IF-2</fullName>
    </recommendedName>
</protein>
<feature type="chain" id="PRO_0000137188" description="Translation initiation factor IF-2">
    <location>
        <begin position="1"/>
        <end position="896"/>
    </location>
</feature>
<feature type="domain" description="tr-type G">
    <location>
        <begin position="401"/>
        <end position="570"/>
    </location>
</feature>
<feature type="region of interest" description="Disordered" evidence="2">
    <location>
        <begin position="32"/>
        <end position="306"/>
    </location>
</feature>
<feature type="region of interest" description="G1" evidence="1">
    <location>
        <begin position="410"/>
        <end position="417"/>
    </location>
</feature>
<feature type="region of interest" description="G2" evidence="1">
    <location>
        <begin position="435"/>
        <end position="439"/>
    </location>
</feature>
<feature type="region of interest" description="G3" evidence="1">
    <location>
        <begin position="456"/>
        <end position="459"/>
    </location>
</feature>
<feature type="region of interest" description="G4" evidence="1">
    <location>
        <begin position="510"/>
        <end position="513"/>
    </location>
</feature>
<feature type="region of interest" description="G5" evidence="1">
    <location>
        <begin position="546"/>
        <end position="548"/>
    </location>
</feature>
<feature type="compositionally biased region" description="Polar residues" evidence="2">
    <location>
        <begin position="35"/>
        <end position="48"/>
    </location>
</feature>
<feature type="compositionally biased region" description="Polar residues" evidence="2">
    <location>
        <begin position="114"/>
        <end position="126"/>
    </location>
</feature>
<feature type="compositionally biased region" description="Basic and acidic residues" evidence="2">
    <location>
        <begin position="156"/>
        <end position="170"/>
    </location>
</feature>
<feature type="compositionally biased region" description="Polar residues" evidence="2">
    <location>
        <begin position="213"/>
        <end position="237"/>
    </location>
</feature>
<feature type="compositionally biased region" description="Basic and acidic residues" evidence="2">
    <location>
        <begin position="256"/>
        <end position="280"/>
    </location>
</feature>
<feature type="binding site" evidence="1">
    <location>
        <begin position="410"/>
        <end position="417"/>
    </location>
    <ligand>
        <name>GTP</name>
        <dbReference type="ChEBI" id="CHEBI:37565"/>
    </ligand>
</feature>
<feature type="binding site" evidence="1">
    <location>
        <begin position="456"/>
        <end position="460"/>
    </location>
    <ligand>
        <name>GTP</name>
        <dbReference type="ChEBI" id="CHEBI:37565"/>
    </ligand>
</feature>
<feature type="binding site" evidence="1">
    <location>
        <begin position="510"/>
        <end position="513"/>
    </location>
    <ligand>
        <name>GTP</name>
        <dbReference type="ChEBI" id="CHEBI:37565"/>
    </ligand>
</feature>
<accession>Q9PKU0</accession>
<reference key="1">
    <citation type="journal article" date="2000" name="Nucleic Acids Res.">
        <title>Genome sequences of Chlamydia trachomatis MoPn and Chlamydia pneumoniae AR39.</title>
        <authorList>
            <person name="Read T.D."/>
            <person name="Brunham R.C."/>
            <person name="Shen C."/>
            <person name="Gill S.R."/>
            <person name="Heidelberg J.F."/>
            <person name="White O."/>
            <person name="Hickey E.K."/>
            <person name="Peterson J.D."/>
            <person name="Utterback T.R."/>
            <person name="Berry K.J."/>
            <person name="Bass S."/>
            <person name="Linher K.D."/>
            <person name="Weidman J.F."/>
            <person name="Khouri H.M."/>
            <person name="Craven B."/>
            <person name="Bowman C."/>
            <person name="Dodson R.J."/>
            <person name="Gwinn M.L."/>
            <person name="Nelson W.C."/>
            <person name="DeBoy R.T."/>
            <person name="Kolonay J.F."/>
            <person name="McClarty G."/>
            <person name="Salzberg S.L."/>
            <person name="Eisen J.A."/>
            <person name="Fraser C.M."/>
        </authorList>
    </citation>
    <scope>NUCLEOTIDE SEQUENCE [LARGE SCALE GENOMIC DNA]</scope>
    <source>
        <strain>MoPn / Nigg</strain>
    </source>
</reference>
<evidence type="ECO:0000250" key="1"/>
<evidence type="ECO:0000256" key="2">
    <source>
        <dbReference type="SAM" id="MobiDB-lite"/>
    </source>
</evidence>
<evidence type="ECO:0000305" key="3"/>